<organism>
    <name type="scientific">Staphylococcus aureus (strain N315)</name>
    <dbReference type="NCBI Taxonomy" id="158879"/>
    <lineage>
        <taxon>Bacteria</taxon>
        <taxon>Bacillati</taxon>
        <taxon>Bacillota</taxon>
        <taxon>Bacilli</taxon>
        <taxon>Bacillales</taxon>
        <taxon>Staphylococcaceae</taxon>
        <taxon>Staphylococcus</taxon>
    </lineage>
</organism>
<dbReference type="EC" id="2.3.2.18"/>
<dbReference type="EMBL" id="BA000018">
    <property type="protein sequence ID" value="BAB42467.1"/>
    <property type="molecule type" value="Genomic_DNA"/>
</dbReference>
<dbReference type="RefSeq" id="WP_000673098.1">
    <property type="nucleotide sequence ID" value="NC_002745.2"/>
</dbReference>
<dbReference type="SMR" id="P0A0A7"/>
<dbReference type="EnsemblBacteria" id="BAB42467">
    <property type="protein sequence ID" value="BAB42467"/>
    <property type="gene ID" value="BAB42467"/>
</dbReference>
<dbReference type="KEGG" id="sau:SA1207"/>
<dbReference type="HOGENOM" id="CLU_048411_1_0_9"/>
<dbReference type="GO" id="GO:0005737">
    <property type="term" value="C:cytoplasm"/>
    <property type="evidence" value="ECO:0007669"/>
    <property type="project" value="UniProtKB-SubCell"/>
</dbReference>
<dbReference type="GO" id="GO:0016755">
    <property type="term" value="F:aminoacyltransferase activity"/>
    <property type="evidence" value="ECO:0007669"/>
    <property type="project" value="InterPro"/>
</dbReference>
<dbReference type="GO" id="GO:0071555">
    <property type="term" value="P:cell wall organization"/>
    <property type="evidence" value="ECO:0007669"/>
    <property type="project" value="UniProtKB-KW"/>
</dbReference>
<dbReference type="GO" id="GO:0009252">
    <property type="term" value="P:peptidoglycan biosynthetic process"/>
    <property type="evidence" value="ECO:0007669"/>
    <property type="project" value="UniProtKB-KW"/>
</dbReference>
<dbReference type="GO" id="GO:0008360">
    <property type="term" value="P:regulation of cell shape"/>
    <property type="evidence" value="ECO:0007669"/>
    <property type="project" value="UniProtKB-KW"/>
</dbReference>
<dbReference type="GO" id="GO:0046677">
    <property type="term" value="P:response to antibiotic"/>
    <property type="evidence" value="ECO:0007669"/>
    <property type="project" value="UniProtKB-KW"/>
</dbReference>
<dbReference type="Gene3D" id="1.20.58.90">
    <property type="match status" value="1"/>
</dbReference>
<dbReference type="Gene3D" id="3.40.630.30">
    <property type="match status" value="2"/>
</dbReference>
<dbReference type="InterPro" id="IPR016181">
    <property type="entry name" value="Acyl_CoA_acyltransferase"/>
</dbReference>
<dbReference type="InterPro" id="IPR003447">
    <property type="entry name" value="FEMABX"/>
</dbReference>
<dbReference type="InterPro" id="IPR050644">
    <property type="entry name" value="PG_Glycine_Bridge_Synth"/>
</dbReference>
<dbReference type="PANTHER" id="PTHR36174:SF2">
    <property type="entry name" value="AMINOACYLTRANSFERASE FEMA"/>
    <property type="match status" value="1"/>
</dbReference>
<dbReference type="PANTHER" id="PTHR36174">
    <property type="entry name" value="LIPID II:GLYCINE GLYCYLTRANSFERASE"/>
    <property type="match status" value="1"/>
</dbReference>
<dbReference type="Pfam" id="PF02388">
    <property type="entry name" value="FemAB"/>
    <property type="match status" value="1"/>
</dbReference>
<dbReference type="SUPFAM" id="SSF55729">
    <property type="entry name" value="Acyl-CoA N-acyltransferases (Nat)"/>
    <property type="match status" value="2"/>
</dbReference>
<dbReference type="PROSITE" id="PS51191">
    <property type="entry name" value="FEMABX"/>
    <property type="match status" value="1"/>
</dbReference>
<feature type="chain" id="PRO_0000204740" description="Aminoacyltransferase FemB">
    <location>
        <begin position="1"/>
        <end position="419"/>
    </location>
</feature>
<gene>
    <name type="primary">femB</name>
    <name type="ordered locus">SA1207</name>
</gene>
<protein>
    <recommendedName>
        <fullName>Aminoacyltransferase FemB</fullName>
        <ecNumber>2.3.2.18</ecNumber>
    </recommendedName>
    <alternativeName>
        <fullName>Factor essential for expression of methicillin resistance B</fullName>
    </alternativeName>
    <alternativeName>
        <fullName>N-acetylmuramoyl-L-alanyl-D-glutamyl-L-lysyl-(N6-triglycine)-D-alanyl-D-alanine-diphosphoundecaprenyl-N-acetylglucosamine:glycine glycyltransferase</fullName>
    </alternativeName>
</protein>
<proteinExistence type="evidence at protein level"/>
<comment type="function">
    <text evidence="1">Catalyzes the formation of the pentaglycine interpeptide bridge, which is characteristic of the S.aureus peptidoglycan. Adds glycines 4 and 5 of the pentaglycine bridge, using glycyl-tRNA(Gly) as donor. Involved in resistance to methicillin (By similarity).</text>
</comment>
<comment type="catalytic activity">
    <reaction>
        <text>MurNAc-L-Ala-D-isoglutaminyl-L-Lys-(N(6)-tri-Gly)-D-Ala-D-Ala-diphospho-di-trans,octa-cis-undecaprenyl-GlcNAc + 2 glycyl-tRNA(Gly) = MurNAc-L-Ala-D-isoglutaminyl-L-Lys-(N(6)-penta-Gly)-D-Ala-D-Ala-diphospho-di-trans,octa-cis-undecaprenyl-GlcNAc + 2 tRNA(Gly) + 2 H(+)</text>
        <dbReference type="Rhea" id="RHEA:30443"/>
        <dbReference type="Rhea" id="RHEA-COMP:9664"/>
        <dbReference type="Rhea" id="RHEA-COMP:9683"/>
        <dbReference type="ChEBI" id="CHEBI:15378"/>
        <dbReference type="ChEBI" id="CHEBI:62235"/>
        <dbReference type="ChEBI" id="CHEBI:62236"/>
        <dbReference type="ChEBI" id="CHEBI:78442"/>
        <dbReference type="ChEBI" id="CHEBI:78522"/>
        <dbReference type="EC" id="2.3.2.18"/>
    </reaction>
</comment>
<comment type="subunit">
    <text evidence="1">Homodimer. Interacts with FemA (By similarity).</text>
</comment>
<comment type="subcellular location">
    <subcellularLocation>
        <location evidence="1">Cytoplasm</location>
    </subcellularLocation>
</comment>
<comment type="similarity">
    <text evidence="2">Belongs to the FemABX family.</text>
</comment>
<name>FEMB_STAAN</name>
<sequence length="419" mass="49676">MKFTELTVTEFDNFVQNPSLESHYFQVKENIVTRENDGFEVVLLGIKDDNNKVIAASLFSKIPTMGSYVYYSNRGPVMDFSDLGLVDYYLKELDKYLQQHQCLYVKLDPYWLYHLYDKDIVPFEGREKNDALVNLFKSHGYEHHGFTTEYDTSSQVRWMGVLNLEGKTPETLKKTFDSQRKRNINKAINYGVKVRFLERDEFNLFLDLYRETEERAGFVSKTDDYFYNFIDTYGDKVLVPLAYIDLDEYVLKLQQELNDKENRRDQMMAKENKSDKQMKKIAELDKQIDHDQHELLNASELSKTDGPILNLASGVYFANAYEVNYFSGGSSEKYNQFMGPYMMHWFMINYCFDNGYDRYNFYGLSGDFTENSEDYGVYRFKRGFNVQIEELIGDFYKPIHKVKYWLFTTLDKLRKKLKK</sequence>
<accession>P0A0A7</accession>
<accession>P14305</accession>
<evidence type="ECO:0000250" key="1"/>
<evidence type="ECO:0000305" key="2"/>
<reference key="1">
    <citation type="journal article" date="2001" name="Lancet">
        <title>Whole genome sequencing of meticillin-resistant Staphylococcus aureus.</title>
        <authorList>
            <person name="Kuroda M."/>
            <person name="Ohta T."/>
            <person name="Uchiyama I."/>
            <person name="Baba T."/>
            <person name="Yuzawa H."/>
            <person name="Kobayashi I."/>
            <person name="Cui L."/>
            <person name="Oguchi A."/>
            <person name="Aoki K."/>
            <person name="Nagai Y."/>
            <person name="Lian J.-Q."/>
            <person name="Ito T."/>
            <person name="Kanamori M."/>
            <person name="Matsumaru H."/>
            <person name="Maruyama A."/>
            <person name="Murakami H."/>
            <person name="Hosoyama A."/>
            <person name="Mizutani-Ui Y."/>
            <person name="Takahashi N.K."/>
            <person name="Sawano T."/>
            <person name="Inoue R."/>
            <person name="Kaito C."/>
            <person name="Sekimizu K."/>
            <person name="Hirakawa H."/>
            <person name="Kuhara S."/>
            <person name="Goto S."/>
            <person name="Yabuzaki J."/>
            <person name="Kanehisa M."/>
            <person name="Yamashita A."/>
            <person name="Oshima K."/>
            <person name="Furuya K."/>
            <person name="Yoshino C."/>
            <person name="Shiba T."/>
            <person name="Hattori M."/>
            <person name="Ogasawara N."/>
            <person name="Hayashi H."/>
            <person name="Hiramatsu K."/>
        </authorList>
    </citation>
    <scope>NUCLEOTIDE SEQUENCE [LARGE SCALE GENOMIC DNA]</scope>
    <source>
        <strain>N315</strain>
    </source>
</reference>
<reference key="2">
    <citation type="submission" date="2007-10" db="UniProtKB">
        <title>Shotgun proteomic analysis of total and membrane protein extracts of S. aureus strain N315.</title>
        <authorList>
            <person name="Vaezzadeh A.R."/>
            <person name="Deshusses J."/>
            <person name="Lescuyer P."/>
            <person name="Hochstrasser D.F."/>
        </authorList>
    </citation>
    <scope>IDENTIFICATION BY MASS SPECTROMETRY [LARGE SCALE ANALYSIS]</scope>
    <source>
        <strain>N315</strain>
    </source>
</reference>
<keyword id="KW-0012">Acyltransferase</keyword>
<keyword id="KW-0046">Antibiotic resistance</keyword>
<keyword id="KW-0133">Cell shape</keyword>
<keyword id="KW-0961">Cell wall biogenesis/degradation</keyword>
<keyword id="KW-0963">Cytoplasm</keyword>
<keyword id="KW-0573">Peptidoglycan synthesis</keyword>
<keyword id="KW-0808">Transferase</keyword>